<organism>
    <name type="scientific">Oryza sativa subsp. indica</name>
    <name type="common">Rice</name>
    <dbReference type="NCBI Taxonomy" id="39946"/>
    <lineage>
        <taxon>Eukaryota</taxon>
        <taxon>Viridiplantae</taxon>
        <taxon>Streptophyta</taxon>
        <taxon>Embryophyta</taxon>
        <taxon>Tracheophyta</taxon>
        <taxon>Spermatophyta</taxon>
        <taxon>Magnoliopsida</taxon>
        <taxon>Liliopsida</taxon>
        <taxon>Poales</taxon>
        <taxon>Poaceae</taxon>
        <taxon>BOP clade</taxon>
        <taxon>Oryzoideae</taxon>
        <taxon>Oryzeae</taxon>
        <taxon>Oryzinae</taxon>
        <taxon>Oryza</taxon>
        <taxon>Oryza sativa</taxon>
    </lineage>
</organism>
<dbReference type="EMBL" id="CM000132">
    <property type="status" value="NOT_ANNOTATED_CDS"/>
    <property type="molecule type" value="Genomic_DNA"/>
</dbReference>
<dbReference type="EMBL" id="AB189042">
    <property type="protein sequence ID" value="BAD38858.1"/>
    <property type="molecule type" value="mRNA"/>
</dbReference>
<dbReference type="EMBL" id="AY359964">
    <property type="protein sequence ID" value="AAQ83694.1"/>
    <property type="molecule type" value="mRNA"/>
</dbReference>
<dbReference type="SMR" id="A2YQ93"/>
<dbReference type="STRING" id="39946.A2YQ93"/>
<dbReference type="Proteomes" id="UP000007015">
    <property type="component" value="Chromosome 7"/>
</dbReference>
<dbReference type="GO" id="GO:0005634">
    <property type="term" value="C:nucleus"/>
    <property type="evidence" value="ECO:0007669"/>
    <property type="project" value="UniProtKB-SubCell"/>
</dbReference>
<dbReference type="GO" id="GO:0009736">
    <property type="term" value="P:cytokinin-activated signaling pathway"/>
    <property type="evidence" value="ECO:0007669"/>
    <property type="project" value="InterPro"/>
</dbReference>
<dbReference type="GO" id="GO:0000160">
    <property type="term" value="P:phosphorelay signal transduction system"/>
    <property type="evidence" value="ECO:0007669"/>
    <property type="project" value="UniProtKB-KW"/>
</dbReference>
<dbReference type="GO" id="GO:0048511">
    <property type="term" value="P:rhythmic process"/>
    <property type="evidence" value="ECO:0007669"/>
    <property type="project" value="UniProtKB-KW"/>
</dbReference>
<dbReference type="CDD" id="cd17582">
    <property type="entry name" value="psREC_PRR"/>
    <property type="match status" value="1"/>
</dbReference>
<dbReference type="FunFam" id="3.40.50.2300:FF:000214">
    <property type="entry name" value="Two-component response regulator-like PRR37"/>
    <property type="match status" value="1"/>
</dbReference>
<dbReference type="Gene3D" id="3.40.50.2300">
    <property type="match status" value="1"/>
</dbReference>
<dbReference type="InterPro" id="IPR045279">
    <property type="entry name" value="ARR-like"/>
</dbReference>
<dbReference type="InterPro" id="IPR010402">
    <property type="entry name" value="CCT_domain"/>
</dbReference>
<dbReference type="InterPro" id="IPR011006">
    <property type="entry name" value="CheY-like_superfamily"/>
</dbReference>
<dbReference type="InterPro" id="IPR001789">
    <property type="entry name" value="Sig_transdc_resp-reg_receiver"/>
</dbReference>
<dbReference type="PANTHER" id="PTHR43874">
    <property type="entry name" value="TWO-COMPONENT RESPONSE REGULATOR"/>
    <property type="match status" value="1"/>
</dbReference>
<dbReference type="PANTHER" id="PTHR43874:SF64">
    <property type="entry name" value="TWO-COMPONENT RESPONSE REGULATOR-LIKE PRR37"/>
    <property type="match status" value="1"/>
</dbReference>
<dbReference type="Pfam" id="PF06203">
    <property type="entry name" value="CCT"/>
    <property type="match status" value="1"/>
</dbReference>
<dbReference type="Pfam" id="PF00072">
    <property type="entry name" value="Response_reg"/>
    <property type="match status" value="1"/>
</dbReference>
<dbReference type="SMART" id="SM00448">
    <property type="entry name" value="REC"/>
    <property type="match status" value="1"/>
</dbReference>
<dbReference type="SUPFAM" id="SSF52172">
    <property type="entry name" value="CheY-like"/>
    <property type="match status" value="1"/>
</dbReference>
<dbReference type="PROSITE" id="PS51017">
    <property type="entry name" value="CCT"/>
    <property type="match status" value="1"/>
</dbReference>
<dbReference type="PROSITE" id="PS50110">
    <property type="entry name" value="RESPONSE_REGULATORY"/>
    <property type="match status" value="1"/>
</dbReference>
<accession>A2YQ93</accession>
<accession>Q689G5</accession>
<accession>Q689G8</accession>
<accession>Q6UV11</accession>
<accession>Q6Z3X9</accession>
<sequence>MMGTAHHNQTAGSALGVGVGDANDAVPGAGGGGYSDPDGGPISGVQRPPQVCWERFIQKKTIKVLLVDSDDSTRQVVSALLRHCMYEVIPAENGQQAWTYLEDMQNSIDLVLTEVVMPGVSGISLLSRIMNHNICKNIPVIMMSSNDAMGTVFKCLSKGAVDFLVKPIRKNELKNLWQHVWRRCHSSSGSGSESGIQTQKCAKSKSGDESNNNSGSNDDDDDDGVIMGLNARDGSDNGSGTQAQSSWTKRAVEIDSPQAMSPDQLADPPDSTCAQVIHLKSDICSNRWLPCTSNKNSKKQKETNDDFKGKDLEIGSPRNLNTAYQSSPNERSIKPTDRRNEYPLQNNSKEAAMENLEESSVRAADLIGSMAKNMDAQQAARATNAPNCSSKVPEGKDKNRDNIMPSLELSLKRSRSTGDDANAIQEEQRNVLRRSDLSAFTRYHTPVASNQGGTGFVGSCSPHDNISEAMKTDSAYNMKSNSDAAPIKQGSNGSSNNNDMGSTTKNVVTKPSTNKERVMSPSAVKANGHTSAFHPAQHWTSPANTTGKEKTDEVANNAAKRAQPGEVQSNLVQHPRPILHYVHFDVSRENGGSGAPQCGSSNVFDPPVEGHAANYGVNGSNSGSNNGSNGQNGSTTAVNAERPNMEIANGTINKSGPGGGNGSGSGSGNDMYLKRFTQREHRVAAVIKFRQKRKERNFGKKVRYQSRKRLAEQRPRVRGQFVRQAVQDQQQQGGGREAAADR</sequence>
<name>PRR37_ORYSI</name>
<feature type="chain" id="PRO_0000303007" description="Two-component response regulator-like PRR37">
    <location>
        <begin position="1"/>
        <end position="742"/>
    </location>
</feature>
<feature type="domain" description="Response regulatory" evidence="2">
    <location>
        <begin position="63"/>
        <end position="181"/>
    </location>
</feature>
<feature type="domain" description="CCT" evidence="3">
    <location>
        <begin position="682"/>
        <end position="724"/>
    </location>
</feature>
<feature type="region of interest" description="Disordered" evidence="4">
    <location>
        <begin position="186"/>
        <end position="249"/>
    </location>
</feature>
<feature type="region of interest" description="Disordered" evidence="4">
    <location>
        <begin position="290"/>
        <end position="346"/>
    </location>
</feature>
<feature type="region of interest" description="Disordered" evidence="4">
    <location>
        <begin position="375"/>
        <end position="402"/>
    </location>
</feature>
<feature type="region of interest" description="Disordered" evidence="4">
    <location>
        <begin position="478"/>
        <end position="570"/>
    </location>
</feature>
<feature type="region of interest" description="Disordered" evidence="4">
    <location>
        <begin position="590"/>
        <end position="671"/>
    </location>
</feature>
<feature type="region of interest" description="Disordered" evidence="4">
    <location>
        <begin position="697"/>
        <end position="742"/>
    </location>
</feature>
<feature type="compositionally biased region" description="Low complexity" evidence="4">
    <location>
        <begin position="186"/>
        <end position="195"/>
    </location>
</feature>
<feature type="compositionally biased region" description="Polar residues" evidence="4">
    <location>
        <begin position="236"/>
        <end position="248"/>
    </location>
</feature>
<feature type="compositionally biased region" description="Basic and acidic residues" evidence="4">
    <location>
        <begin position="299"/>
        <end position="313"/>
    </location>
</feature>
<feature type="compositionally biased region" description="Polar residues" evidence="4">
    <location>
        <begin position="318"/>
        <end position="330"/>
    </location>
</feature>
<feature type="compositionally biased region" description="Basic and acidic residues" evidence="4">
    <location>
        <begin position="331"/>
        <end position="341"/>
    </location>
</feature>
<feature type="compositionally biased region" description="Polar residues" evidence="4">
    <location>
        <begin position="380"/>
        <end position="390"/>
    </location>
</feature>
<feature type="compositionally biased region" description="Low complexity" evidence="4">
    <location>
        <begin position="490"/>
        <end position="502"/>
    </location>
</feature>
<feature type="compositionally biased region" description="Polar residues" evidence="4">
    <location>
        <begin position="503"/>
        <end position="512"/>
    </location>
</feature>
<feature type="compositionally biased region" description="Low complexity" evidence="4">
    <location>
        <begin position="618"/>
        <end position="634"/>
    </location>
</feature>
<feature type="compositionally biased region" description="Gly residues" evidence="4">
    <location>
        <begin position="656"/>
        <end position="667"/>
    </location>
</feature>
<feature type="compositionally biased region" description="Basic residues" evidence="4">
    <location>
        <begin position="697"/>
        <end position="708"/>
    </location>
</feature>
<feature type="compositionally biased region" description="Low complexity" evidence="4">
    <location>
        <begin position="719"/>
        <end position="731"/>
    </location>
</feature>
<feature type="sequence conflict" description="In Ref. 2; BAD38858." evidence="6" ref="2">
    <original>I</original>
    <variation>T</variation>
    <location>
        <position position="42"/>
    </location>
</feature>
<feature type="sequence conflict" description="In Ref. 2; BAD38858." evidence="6" ref="2">
    <original>R</original>
    <variation>P</variation>
    <location>
        <position position="47"/>
    </location>
</feature>
<feature type="sequence conflict" description="In Ref. 3; AAQ83694." evidence="6" ref="3">
    <original>DL</original>
    <variation>VF</variation>
    <location>
        <begin position="109"/>
        <end position="110"/>
    </location>
</feature>
<feature type="sequence conflict" description="In Ref. 3; AAQ83694." evidence="6" ref="3">
    <original>HNICKNI</original>
    <variation>PQYFARIF</variation>
    <location>
        <begin position="132"/>
        <end position="138"/>
    </location>
</feature>
<feature type="sequence conflict" description="In Ref. 2; BAD38858." evidence="6" ref="2">
    <original>S</original>
    <variation>N</variation>
    <location>
        <position position="214"/>
    </location>
</feature>
<feature type="sequence conflict" description="In Ref. 2; BAD38858." evidence="6" ref="2">
    <original>T</original>
    <variation>A</variation>
    <location>
        <position position="383"/>
    </location>
</feature>
<feature type="sequence conflict" description="In Ref. 1; CM000132." evidence="6" ref="1">
    <original>D</original>
    <variation>G</variation>
    <location>
        <position position="420"/>
    </location>
</feature>
<feature type="sequence conflict" description="In Ref. 2; BAD38858." evidence="6" ref="2">
    <original>N</original>
    <variation>D</variation>
    <location>
        <position position="639"/>
    </location>
</feature>
<protein>
    <recommendedName>
        <fullName>Two-component response regulator-like PRR37</fullName>
    </recommendedName>
    <alternativeName>
        <fullName>Pseudo-response regulator 37</fullName>
        <shortName>OsPRR37</shortName>
    </alternativeName>
</protein>
<gene>
    <name type="primary">PRR37</name>
    <name type="ORF">OsI_026486</name>
</gene>
<reference key="1">
    <citation type="journal article" date="2005" name="PLoS Biol.">
        <title>The genomes of Oryza sativa: a history of duplications.</title>
        <authorList>
            <person name="Yu J."/>
            <person name="Wang J."/>
            <person name="Lin W."/>
            <person name="Li S."/>
            <person name="Li H."/>
            <person name="Zhou J."/>
            <person name="Ni P."/>
            <person name="Dong W."/>
            <person name="Hu S."/>
            <person name="Zeng C."/>
            <person name="Zhang J."/>
            <person name="Zhang Y."/>
            <person name="Li R."/>
            <person name="Xu Z."/>
            <person name="Li S."/>
            <person name="Li X."/>
            <person name="Zheng H."/>
            <person name="Cong L."/>
            <person name="Lin L."/>
            <person name="Yin J."/>
            <person name="Geng J."/>
            <person name="Li G."/>
            <person name="Shi J."/>
            <person name="Liu J."/>
            <person name="Lv H."/>
            <person name="Li J."/>
            <person name="Wang J."/>
            <person name="Deng Y."/>
            <person name="Ran L."/>
            <person name="Shi X."/>
            <person name="Wang X."/>
            <person name="Wu Q."/>
            <person name="Li C."/>
            <person name="Ren X."/>
            <person name="Wang J."/>
            <person name="Wang X."/>
            <person name="Li D."/>
            <person name="Liu D."/>
            <person name="Zhang X."/>
            <person name="Ji Z."/>
            <person name="Zhao W."/>
            <person name="Sun Y."/>
            <person name="Zhang Z."/>
            <person name="Bao J."/>
            <person name="Han Y."/>
            <person name="Dong L."/>
            <person name="Ji J."/>
            <person name="Chen P."/>
            <person name="Wu S."/>
            <person name="Liu J."/>
            <person name="Xiao Y."/>
            <person name="Bu D."/>
            <person name="Tan J."/>
            <person name="Yang L."/>
            <person name="Ye C."/>
            <person name="Zhang J."/>
            <person name="Xu J."/>
            <person name="Zhou Y."/>
            <person name="Yu Y."/>
            <person name="Zhang B."/>
            <person name="Zhuang S."/>
            <person name="Wei H."/>
            <person name="Liu B."/>
            <person name="Lei M."/>
            <person name="Yu H."/>
            <person name="Li Y."/>
            <person name="Xu H."/>
            <person name="Wei S."/>
            <person name="He X."/>
            <person name="Fang L."/>
            <person name="Zhang Z."/>
            <person name="Zhang Y."/>
            <person name="Huang X."/>
            <person name="Su Z."/>
            <person name="Tong W."/>
            <person name="Li J."/>
            <person name="Tong Z."/>
            <person name="Li S."/>
            <person name="Ye J."/>
            <person name="Wang L."/>
            <person name="Fang L."/>
            <person name="Lei T."/>
            <person name="Chen C.-S."/>
            <person name="Chen H.-C."/>
            <person name="Xu Z."/>
            <person name="Li H."/>
            <person name="Huang H."/>
            <person name="Zhang F."/>
            <person name="Xu H."/>
            <person name="Li N."/>
            <person name="Zhao C."/>
            <person name="Li S."/>
            <person name="Dong L."/>
            <person name="Huang Y."/>
            <person name="Li L."/>
            <person name="Xi Y."/>
            <person name="Qi Q."/>
            <person name="Li W."/>
            <person name="Zhang B."/>
            <person name="Hu W."/>
            <person name="Zhang Y."/>
            <person name="Tian X."/>
            <person name="Jiao Y."/>
            <person name="Liang X."/>
            <person name="Jin J."/>
            <person name="Gao L."/>
            <person name="Zheng W."/>
            <person name="Hao B."/>
            <person name="Liu S.-M."/>
            <person name="Wang W."/>
            <person name="Yuan L."/>
            <person name="Cao M."/>
            <person name="McDermott J."/>
            <person name="Samudrala R."/>
            <person name="Wang J."/>
            <person name="Wong G.K.-S."/>
            <person name="Yang H."/>
        </authorList>
    </citation>
    <scope>NUCLEOTIDE SEQUENCE [LARGE SCALE GENOMIC DNA]</scope>
    <source>
        <strain>cv. 93-11</strain>
    </source>
</reference>
<reference key="2">
    <citation type="journal article" date="2005" name="Biosci. Biotechnol. Biochem.">
        <title>Circadian-associated rice pseudo response regulators (OsPRRs): insight into the control of flowering time.</title>
        <authorList>
            <person name="Murakami M."/>
            <person name="Matsushika A."/>
            <person name="Ashikari M."/>
            <person name="Yamashino T."/>
            <person name="Mizuno T."/>
        </authorList>
    </citation>
    <scope>NUCLEOTIDE SEQUENCE [MRNA] OF 1-704</scope>
    <scope>INDUCTION</scope>
    <source>
        <strain>cv. Kasalath</strain>
    </source>
</reference>
<reference key="3">
    <citation type="submission" date="2003-08" db="EMBL/GenBank/DDBJ databases">
        <title>Differential expression of pseudo-response regulator gene in rice hybrid F1 (Shanyou 63) and its parents.</title>
        <authorList>
            <person name="Wang Y."/>
            <person name="Wei C."/>
            <person name="Yang J."/>
        </authorList>
    </citation>
    <scope>NUCLEOTIDE SEQUENCE [MRNA] OF 104-742</scope>
</reference>
<evidence type="ECO:0000250" key="1"/>
<evidence type="ECO:0000255" key="2">
    <source>
        <dbReference type="PROSITE-ProRule" id="PRU00169"/>
    </source>
</evidence>
<evidence type="ECO:0000255" key="3">
    <source>
        <dbReference type="PROSITE-ProRule" id="PRU00357"/>
    </source>
</evidence>
<evidence type="ECO:0000256" key="4">
    <source>
        <dbReference type="SAM" id="MobiDB-lite"/>
    </source>
</evidence>
<evidence type="ECO:0000269" key="5">
    <source>
    </source>
</evidence>
<evidence type="ECO:0000305" key="6"/>
<comment type="function">
    <text evidence="1">Controls photoperiodic flowering response. Seems to be one of the component of the circadian clock. Expression of several members of the ARR-like family is controlled by circadian rhythm. The particular coordinated sequential expression of PRR73, PRR37, PRR95, PRR59 and PPR1 result to circadian waves that may be at the basis of the endogenous circadian clock (By similarity).</text>
</comment>
<comment type="subcellular location">
    <subcellularLocation>
        <location evidence="6">Nucleus</location>
    </subcellularLocation>
</comment>
<comment type="induction">
    <text evidence="5">Expressed with a circadian rhythm showing a broad peak in the middle day.</text>
</comment>
<comment type="similarity">
    <text evidence="6">Belongs to the ARR-like family.</text>
</comment>
<comment type="caution">
    <text evidence="6">Lacks the phospho-accepting Asp (here Glu-114), present in the receiver domain, which is one of the conserved features of two-component response regulators (ARRs) family.</text>
</comment>
<keyword id="KW-0090">Biological rhythms</keyword>
<keyword id="KW-0539">Nucleus</keyword>
<keyword id="KW-1185">Reference proteome</keyword>
<keyword id="KW-0804">Transcription</keyword>
<keyword id="KW-0805">Transcription regulation</keyword>
<keyword id="KW-0902">Two-component regulatory system</keyword>
<proteinExistence type="evidence at transcript level"/>